<dbReference type="EC" id="2.1.1.-" evidence="1"/>
<dbReference type="EC" id="2.1.1.35" evidence="1"/>
<dbReference type="EMBL" id="CP000821">
    <property type="protein sequence ID" value="ABV38940.1"/>
    <property type="molecule type" value="Genomic_DNA"/>
</dbReference>
<dbReference type="RefSeq" id="WP_012144667.1">
    <property type="nucleotide sequence ID" value="NC_009831.1"/>
</dbReference>
<dbReference type="SMR" id="A8G1G7"/>
<dbReference type="STRING" id="425104.Ssed_4338"/>
<dbReference type="KEGG" id="sse:Ssed_4338"/>
<dbReference type="eggNOG" id="COG2265">
    <property type="taxonomic scope" value="Bacteria"/>
</dbReference>
<dbReference type="HOGENOM" id="CLU_043022_0_0_6"/>
<dbReference type="OrthoDB" id="9804590at2"/>
<dbReference type="Proteomes" id="UP000002015">
    <property type="component" value="Chromosome"/>
</dbReference>
<dbReference type="GO" id="GO:0005829">
    <property type="term" value="C:cytosol"/>
    <property type="evidence" value="ECO:0007669"/>
    <property type="project" value="TreeGrafter"/>
</dbReference>
<dbReference type="GO" id="GO:0019843">
    <property type="term" value="F:rRNA binding"/>
    <property type="evidence" value="ECO:0007669"/>
    <property type="project" value="TreeGrafter"/>
</dbReference>
<dbReference type="GO" id="GO:0030697">
    <property type="term" value="F:tRNA (uracil(54)-C5)-methyltransferase activity, S-adenosyl methionine-dependent"/>
    <property type="evidence" value="ECO:0007669"/>
    <property type="project" value="UniProtKB-UniRule"/>
</dbReference>
<dbReference type="GO" id="GO:0000049">
    <property type="term" value="F:tRNA binding"/>
    <property type="evidence" value="ECO:0007669"/>
    <property type="project" value="TreeGrafter"/>
</dbReference>
<dbReference type="GO" id="GO:0030488">
    <property type="term" value="P:tRNA methylation"/>
    <property type="evidence" value="ECO:0007669"/>
    <property type="project" value="UniProtKB-UniRule"/>
</dbReference>
<dbReference type="CDD" id="cd02440">
    <property type="entry name" value="AdoMet_MTases"/>
    <property type="match status" value="1"/>
</dbReference>
<dbReference type="FunFam" id="2.40.50.1070:FF:000001">
    <property type="entry name" value="tRNA/tmRNA (uracil-C(5))-methyltransferase"/>
    <property type="match status" value="1"/>
</dbReference>
<dbReference type="FunFam" id="3.40.50.150:FF:000012">
    <property type="entry name" value="tRNA/tmRNA (uracil-C(5))-methyltransferase"/>
    <property type="match status" value="1"/>
</dbReference>
<dbReference type="Gene3D" id="2.40.50.1070">
    <property type="match status" value="1"/>
</dbReference>
<dbReference type="Gene3D" id="3.40.50.150">
    <property type="entry name" value="Vaccinia Virus protein VP39"/>
    <property type="match status" value="1"/>
</dbReference>
<dbReference type="HAMAP" id="MF_01011">
    <property type="entry name" value="RNA_methyltr_TrmA"/>
    <property type="match status" value="1"/>
</dbReference>
<dbReference type="InterPro" id="IPR030390">
    <property type="entry name" value="MeTrfase_TrmA_AS"/>
</dbReference>
<dbReference type="InterPro" id="IPR030391">
    <property type="entry name" value="MeTrfase_TrmA_CS"/>
</dbReference>
<dbReference type="InterPro" id="IPR029063">
    <property type="entry name" value="SAM-dependent_MTases_sf"/>
</dbReference>
<dbReference type="InterPro" id="IPR011869">
    <property type="entry name" value="TrmA_MeTrfase"/>
</dbReference>
<dbReference type="InterPro" id="IPR010280">
    <property type="entry name" value="U5_MeTrfase_fam"/>
</dbReference>
<dbReference type="NCBIfam" id="TIGR02143">
    <property type="entry name" value="trmA_only"/>
    <property type="match status" value="1"/>
</dbReference>
<dbReference type="PANTHER" id="PTHR47790">
    <property type="entry name" value="TRNA/TMRNA (URACIL-C(5))-METHYLTRANSFERASE"/>
    <property type="match status" value="1"/>
</dbReference>
<dbReference type="PANTHER" id="PTHR47790:SF2">
    <property type="entry name" value="TRNA_TMRNA (URACIL-C(5))-METHYLTRANSFERASE"/>
    <property type="match status" value="1"/>
</dbReference>
<dbReference type="Pfam" id="PF05958">
    <property type="entry name" value="tRNA_U5-meth_tr"/>
    <property type="match status" value="1"/>
</dbReference>
<dbReference type="SUPFAM" id="SSF53335">
    <property type="entry name" value="S-adenosyl-L-methionine-dependent methyltransferases"/>
    <property type="match status" value="1"/>
</dbReference>
<dbReference type="PROSITE" id="PS51687">
    <property type="entry name" value="SAM_MT_RNA_M5U"/>
    <property type="match status" value="1"/>
</dbReference>
<dbReference type="PROSITE" id="PS01230">
    <property type="entry name" value="TRMA_1"/>
    <property type="match status" value="1"/>
</dbReference>
<dbReference type="PROSITE" id="PS01231">
    <property type="entry name" value="TRMA_2"/>
    <property type="match status" value="1"/>
</dbReference>
<keyword id="KW-0489">Methyltransferase</keyword>
<keyword id="KW-1185">Reference proteome</keyword>
<keyword id="KW-0949">S-adenosyl-L-methionine</keyword>
<keyword id="KW-0808">Transferase</keyword>
<keyword id="KW-0819">tRNA processing</keyword>
<comment type="function">
    <text evidence="1">Dual-specificity methyltransferase that catalyzes the formation of 5-methyluridine at position 54 (m5U54) in all tRNAs, and that of position 341 (m5U341) in tmRNA (transfer-mRNA).</text>
</comment>
<comment type="catalytic activity">
    <reaction evidence="1">
        <text>uridine(54) in tRNA + S-adenosyl-L-methionine = 5-methyluridine(54) in tRNA + S-adenosyl-L-homocysteine + H(+)</text>
        <dbReference type="Rhea" id="RHEA:42712"/>
        <dbReference type="Rhea" id="RHEA-COMP:10167"/>
        <dbReference type="Rhea" id="RHEA-COMP:10193"/>
        <dbReference type="ChEBI" id="CHEBI:15378"/>
        <dbReference type="ChEBI" id="CHEBI:57856"/>
        <dbReference type="ChEBI" id="CHEBI:59789"/>
        <dbReference type="ChEBI" id="CHEBI:65315"/>
        <dbReference type="ChEBI" id="CHEBI:74447"/>
        <dbReference type="EC" id="2.1.1.35"/>
    </reaction>
</comment>
<comment type="catalytic activity">
    <reaction evidence="1">
        <text>uridine(341) in tmRNA + S-adenosyl-L-methionine = 5-methyluridine(341) in tmRNA + S-adenosyl-L-homocysteine + H(+)</text>
        <dbReference type="Rhea" id="RHEA:43612"/>
        <dbReference type="Rhea" id="RHEA-COMP:10630"/>
        <dbReference type="Rhea" id="RHEA-COMP:10631"/>
        <dbReference type="ChEBI" id="CHEBI:15378"/>
        <dbReference type="ChEBI" id="CHEBI:57856"/>
        <dbReference type="ChEBI" id="CHEBI:59789"/>
        <dbReference type="ChEBI" id="CHEBI:65315"/>
        <dbReference type="ChEBI" id="CHEBI:74447"/>
    </reaction>
</comment>
<comment type="similarity">
    <text evidence="1">Belongs to the class I-like SAM-binding methyltransferase superfamily. RNA M5U methyltransferase family. TrmA subfamily.</text>
</comment>
<protein>
    <recommendedName>
        <fullName evidence="1">tRNA/tmRNA (uracil-C(5))-methyltransferase</fullName>
        <ecNumber evidence="1">2.1.1.-</ecNumber>
        <ecNumber evidence="1">2.1.1.35</ecNumber>
    </recommendedName>
    <alternativeName>
        <fullName evidence="1">tRNA (uracil(54)-C(5))-methyltransferase</fullName>
    </alternativeName>
    <alternativeName>
        <fullName evidence="1">tRNA(m5U54)-methyltransferase</fullName>
        <shortName evidence="1">RUMT</shortName>
    </alternativeName>
    <alternativeName>
        <fullName evidence="1">tmRNA (uracil(341)-C(5))-methyltransferase</fullName>
    </alternativeName>
</protein>
<reference key="1">
    <citation type="submission" date="2007-08" db="EMBL/GenBank/DDBJ databases">
        <title>Complete sequence of Shewanella sediminis HAW-EB3.</title>
        <authorList>
            <consortium name="US DOE Joint Genome Institute"/>
            <person name="Copeland A."/>
            <person name="Lucas S."/>
            <person name="Lapidus A."/>
            <person name="Barry K."/>
            <person name="Glavina del Rio T."/>
            <person name="Dalin E."/>
            <person name="Tice H."/>
            <person name="Pitluck S."/>
            <person name="Chertkov O."/>
            <person name="Brettin T."/>
            <person name="Bruce D."/>
            <person name="Detter J.C."/>
            <person name="Han C."/>
            <person name="Schmutz J."/>
            <person name="Larimer F."/>
            <person name="Land M."/>
            <person name="Hauser L."/>
            <person name="Kyrpides N."/>
            <person name="Kim E."/>
            <person name="Zhao J.-S."/>
            <person name="Richardson P."/>
        </authorList>
    </citation>
    <scope>NUCLEOTIDE SEQUENCE [LARGE SCALE GENOMIC DNA]</scope>
    <source>
        <strain>HAW-EB3</strain>
    </source>
</reference>
<organism>
    <name type="scientific">Shewanella sediminis (strain HAW-EB3)</name>
    <dbReference type="NCBI Taxonomy" id="425104"/>
    <lineage>
        <taxon>Bacteria</taxon>
        <taxon>Pseudomonadati</taxon>
        <taxon>Pseudomonadota</taxon>
        <taxon>Gammaproteobacteria</taxon>
        <taxon>Alteromonadales</taxon>
        <taxon>Shewanellaceae</taxon>
        <taxon>Shewanella</taxon>
    </lineage>
</organism>
<accession>A8G1G7</accession>
<evidence type="ECO:0000255" key="1">
    <source>
        <dbReference type="HAMAP-Rule" id="MF_01011"/>
    </source>
</evidence>
<gene>
    <name evidence="1" type="primary">trmA</name>
    <name type="ordered locus">Ssed_4338</name>
</gene>
<name>TRMA_SHESH</name>
<feature type="chain" id="PRO_1000084044" description="tRNA/tmRNA (uracil-C(5))-methyltransferase">
    <location>
        <begin position="1"/>
        <end position="365"/>
    </location>
</feature>
<feature type="active site" description="Nucleophile" evidence="1">
    <location>
        <position position="323"/>
    </location>
</feature>
<feature type="active site" description="Proton acceptor" evidence="1">
    <location>
        <position position="357"/>
    </location>
</feature>
<feature type="binding site" evidence="1">
    <location>
        <position position="189"/>
    </location>
    <ligand>
        <name>S-adenosyl-L-methionine</name>
        <dbReference type="ChEBI" id="CHEBI:59789"/>
    </ligand>
</feature>
<feature type="binding site" evidence="1">
    <location>
        <position position="217"/>
    </location>
    <ligand>
        <name>S-adenosyl-L-methionine</name>
        <dbReference type="ChEBI" id="CHEBI:59789"/>
    </ligand>
</feature>
<feature type="binding site" evidence="1">
    <location>
        <position position="222"/>
    </location>
    <ligand>
        <name>S-adenosyl-L-methionine</name>
        <dbReference type="ChEBI" id="CHEBI:59789"/>
    </ligand>
</feature>
<feature type="binding site" evidence="1">
    <location>
        <position position="238"/>
    </location>
    <ligand>
        <name>S-adenosyl-L-methionine</name>
        <dbReference type="ChEBI" id="CHEBI:59789"/>
    </ligand>
</feature>
<feature type="binding site" evidence="1">
    <location>
        <position position="298"/>
    </location>
    <ligand>
        <name>S-adenosyl-L-methionine</name>
        <dbReference type="ChEBI" id="CHEBI:59789"/>
    </ligand>
</feature>
<proteinExistence type="inferred from homology"/>
<sequence length="365" mass="42307">MNLAAMDPNTYDAQLEEKRIKLEQIFTDFDTPKLEVFSSEPAHYRMRAEFRIWHDGEDMYYYMFDKALDSKVRCDQFLPASELINKVMPALMEELRPNPTLRHRLFQIDFLSTLSGEILVSLLYHKQLDAQWEIEAKALKEKLAATFNINIIGRARKQKLIIDKDFVIESLTVNNEQLQYHQIENSFTQPNGKVSVKMLEWAIDVTKNSQGDLLELYCGNGNFSIALAQNFDRVLATELAKPSVESAQYNIKINKIDNLQIIRMSAEDFTDAMAKKRTFRRLEGIDLDSYNCNTIFVDPPRAGMDPDTVKLVQGYDRIVYISCNPNTLIDNLAELSKTHKITRFALFDQFPYTDHMESGVFLERR</sequence>